<feature type="chain" id="PRO_0000133684" description="Probable WRKY transcription factor 43">
    <location>
        <begin position="1"/>
        <end position="109"/>
    </location>
</feature>
<feature type="DNA-binding region" description="WRKY" evidence="2">
    <location>
        <begin position="24"/>
        <end position="89"/>
    </location>
</feature>
<feature type="splice variant" id="VSP_007129" description="In isoform 2." evidence="3">
    <location>
        <begin position="50"/>
        <end position="53"/>
    </location>
</feature>
<dbReference type="EMBL" id="AC005397">
    <property type="protein sequence ID" value="AAC62892.1"/>
    <property type="status" value="ALT_INIT"/>
    <property type="molecule type" value="Genomic_DNA"/>
</dbReference>
<dbReference type="EMBL" id="CP002685">
    <property type="protein sequence ID" value="AEC10646.1"/>
    <property type="molecule type" value="Genomic_DNA"/>
</dbReference>
<dbReference type="EMBL" id="CP002685">
    <property type="protein sequence ID" value="AEC10647.2"/>
    <property type="molecule type" value="Genomic_DNA"/>
</dbReference>
<dbReference type="EMBL" id="AK117931">
    <property type="protein sequence ID" value="BAC42569.1"/>
    <property type="molecule type" value="mRNA"/>
</dbReference>
<dbReference type="EMBL" id="BT004701">
    <property type="protein sequence ID" value="AAO42947.1"/>
    <property type="molecule type" value="mRNA"/>
</dbReference>
<dbReference type="EMBL" id="AF404861">
    <property type="protein sequence ID" value="AAK96199.1"/>
    <property type="molecule type" value="mRNA"/>
</dbReference>
<dbReference type="EMBL" id="AF442391">
    <property type="protein sequence ID" value="AAL35284.1"/>
    <property type="molecule type" value="mRNA"/>
</dbReference>
<dbReference type="PIR" id="A84899">
    <property type="entry name" value="A84899"/>
</dbReference>
<dbReference type="RefSeq" id="NP_182136.2">
    <molecule id="Q8GY11-1"/>
    <property type="nucleotide sequence ID" value="NM_130175.3"/>
</dbReference>
<dbReference type="RefSeq" id="NP_850446.2">
    <molecule id="Q8GY11-2"/>
    <property type="nucleotide sequence ID" value="NM_180115.2"/>
</dbReference>
<dbReference type="SMR" id="Q8GY11"/>
<dbReference type="BioGRID" id="4555">
    <property type="interactions" value="25"/>
</dbReference>
<dbReference type="IntAct" id="Q8GY11">
    <property type="interactions" value="26"/>
</dbReference>
<dbReference type="STRING" id="3702.Q8GY11"/>
<dbReference type="iPTMnet" id="Q8GY11"/>
<dbReference type="PaxDb" id="3702-AT2G46130.1"/>
<dbReference type="EnsemblPlants" id="AT2G46130.1">
    <molecule id="Q8GY11-1"/>
    <property type="protein sequence ID" value="AT2G46130.1"/>
    <property type="gene ID" value="AT2G46130"/>
</dbReference>
<dbReference type="EnsemblPlants" id="AT2G46130.2">
    <molecule id="Q8GY11-2"/>
    <property type="protein sequence ID" value="AT2G46130.2"/>
    <property type="gene ID" value="AT2G46130"/>
</dbReference>
<dbReference type="GeneID" id="819220"/>
<dbReference type="Gramene" id="AT2G46130.1">
    <molecule id="Q8GY11-1"/>
    <property type="protein sequence ID" value="AT2G46130.1"/>
    <property type="gene ID" value="AT2G46130"/>
</dbReference>
<dbReference type="Gramene" id="AT2G46130.2">
    <molecule id="Q8GY11-2"/>
    <property type="protein sequence ID" value="AT2G46130.2"/>
    <property type="gene ID" value="AT2G46130"/>
</dbReference>
<dbReference type="KEGG" id="ath:AT2G46130"/>
<dbReference type="Araport" id="AT2G46130"/>
<dbReference type="TAIR" id="AT2G46130">
    <property type="gene designation" value="WRKY43"/>
</dbReference>
<dbReference type="eggNOG" id="ENOG502RXZS">
    <property type="taxonomic scope" value="Eukaryota"/>
</dbReference>
<dbReference type="InParanoid" id="Q8GY11"/>
<dbReference type="OMA" id="DISHKKM"/>
<dbReference type="OrthoDB" id="1921377at2759"/>
<dbReference type="PhylomeDB" id="Q8GY11"/>
<dbReference type="PRO" id="PR:Q8GY11"/>
<dbReference type="Proteomes" id="UP000006548">
    <property type="component" value="Chromosome 2"/>
</dbReference>
<dbReference type="ExpressionAtlas" id="Q8GY11">
    <property type="expression patterns" value="baseline and differential"/>
</dbReference>
<dbReference type="GO" id="GO:0005634">
    <property type="term" value="C:nucleus"/>
    <property type="evidence" value="ECO:0007669"/>
    <property type="project" value="UniProtKB-SubCell"/>
</dbReference>
<dbReference type="GO" id="GO:0003700">
    <property type="term" value="F:DNA-binding transcription factor activity"/>
    <property type="evidence" value="ECO:0000250"/>
    <property type="project" value="TAIR"/>
</dbReference>
<dbReference type="GO" id="GO:0043565">
    <property type="term" value="F:sequence-specific DNA binding"/>
    <property type="evidence" value="ECO:0007669"/>
    <property type="project" value="InterPro"/>
</dbReference>
<dbReference type="FunFam" id="2.20.25.80:FF:000003">
    <property type="entry name" value="WRKY transcription factor 57"/>
    <property type="match status" value="1"/>
</dbReference>
<dbReference type="Gene3D" id="2.20.25.80">
    <property type="entry name" value="WRKY domain"/>
    <property type="match status" value="1"/>
</dbReference>
<dbReference type="InterPro" id="IPR003657">
    <property type="entry name" value="WRKY_dom"/>
</dbReference>
<dbReference type="InterPro" id="IPR036576">
    <property type="entry name" value="WRKY_dom_sf"/>
</dbReference>
<dbReference type="InterPro" id="IPR044810">
    <property type="entry name" value="WRKY_plant"/>
</dbReference>
<dbReference type="PANTHER" id="PTHR31221:SF111">
    <property type="entry name" value="WRKY TRANSCRIPTION FACTOR 43-RELATED"/>
    <property type="match status" value="1"/>
</dbReference>
<dbReference type="PANTHER" id="PTHR31221">
    <property type="entry name" value="WRKY TRANSCRIPTION FACTOR PROTEIN 1-RELATED"/>
    <property type="match status" value="1"/>
</dbReference>
<dbReference type="Pfam" id="PF03106">
    <property type="entry name" value="WRKY"/>
    <property type="match status" value="1"/>
</dbReference>
<dbReference type="SMART" id="SM00774">
    <property type="entry name" value="WRKY"/>
    <property type="match status" value="1"/>
</dbReference>
<dbReference type="SUPFAM" id="SSF118290">
    <property type="entry name" value="WRKY DNA-binding domain"/>
    <property type="match status" value="1"/>
</dbReference>
<dbReference type="PROSITE" id="PS50811">
    <property type="entry name" value="WRKY"/>
    <property type="match status" value="1"/>
</dbReference>
<reference key="1">
    <citation type="journal article" date="1999" name="Nature">
        <title>Sequence and analysis of chromosome 2 of the plant Arabidopsis thaliana.</title>
        <authorList>
            <person name="Lin X."/>
            <person name="Kaul S."/>
            <person name="Rounsley S.D."/>
            <person name="Shea T.P."/>
            <person name="Benito M.-I."/>
            <person name="Town C.D."/>
            <person name="Fujii C.Y."/>
            <person name="Mason T.M."/>
            <person name="Bowman C.L."/>
            <person name="Barnstead M.E."/>
            <person name="Feldblyum T.V."/>
            <person name="Buell C.R."/>
            <person name="Ketchum K.A."/>
            <person name="Lee J.J."/>
            <person name="Ronning C.M."/>
            <person name="Koo H.L."/>
            <person name="Moffat K.S."/>
            <person name="Cronin L.A."/>
            <person name="Shen M."/>
            <person name="Pai G."/>
            <person name="Van Aken S."/>
            <person name="Umayam L."/>
            <person name="Tallon L.J."/>
            <person name="Gill J.E."/>
            <person name="Adams M.D."/>
            <person name="Carrera A.J."/>
            <person name="Creasy T.H."/>
            <person name="Goodman H.M."/>
            <person name="Somerville C.R."/>
            <person name="Copenhaver G.P."/>
            <person name="Preuss D."/>
            <person name="Nierman W.C."/>
            <person name="White O."/>
            <person name="Eisen J.A."/>
            <person name="Salzberg S.L."/>
            <person name="Fraser C.M."/>
            <person name="Venter J.C."/>
        </authorList>
    </citation>
    <scope>NUCLEOTIDE SEQUENCE [LARGE SCALE GENOMIC DNA]</scope>
    <source>
        <strain>cv. Columbia</strain>
    </source>
</reference>
<reference key="2">
    <citation type="journal article" date="2017" name="Plant J.">
        <title>Araport11: a complete reannotation of the Arabidopsis thaliana reference genome.</title>
        <authorList>
            <person name="Cheng C.Y."/>
            <person name="Krishnakumar V."/>
            <person name="Chan A.P."/>
            <person name="Thibaud-Nissen F."/>
            <person name="Schobel S."/>
            <person name="Town C.D."/>
        </authorList>
    </citation>
    <scope>GENOME REANNOTATION</scope>
    <source>
        <strain>cv. Columbia</strain>
    </source>
</reference>
<reference key="3">
    <citation type="journal article" date="2002" name="Science">
        <title>Functional annotation of a full-length Arabidopsis cDNA collection.</title>
        <authorList>
            <person name="Seki M."/>
            <person name="Narusaka M."/>
            <person name="Kamiya A."/>
            <person name="Ishida J."/>
            <person name="Satou M."/>
            <person name="Sakurai T."/>
            <person name="Nakajima M."/>
            <person name="Enju A."/>
            <person name="Akiyama K."/>
            <person name="Oono Y."/>
            <person name="Muramatsu M."/>
            <person name="Hayashizaki Y."/>
            <person name="Kawai J."/>
            <person name="Carninci P."/>
            <person name="Itoh M."/>
            <person name="Ishii Y."/>
            <person name="Arakawa T."/>
            <person name="Shibata K."/>
            <person name="Shinagawa A."/>
            <person name="Shinozaki K."/>
        </authorList>
    </citation>
    <scope>NUCLEOTIDE SEQUENCE [LARGE SCALE MRNA] (ISOFORM 1)</scope>
    <source>
        <strain>cv. Columbia</strain>
    </source>
</reference>
<reference key="4">
    <citation type="journal article" date="2003" name="Science">
        <title>Empirical analysis of transcriptional activity in the Arabidopsis genome.</title>
        <authorList>
            <person name="Yamada K."/>
            <person name="Lim J."/>
            <person name="Dale J.M."/>
            <person name="Chen H."/>
            <person name="Shinn P."/>
            <person name="Palm C.J."/>
            <person name="Southwick A.M."/>
            <person name="Wu H.C."/>
            <person name="Kim C.J."/>
            <person name="Nguyen M."/>
            <person name="Pham P.K."/>
            <person name="Cheuk R.F."/>
            <person name="Karlin-Newmann G."/>
            <person name="Liu S.X."/>
            <person name="Lam B."/>
            <person name="Sakano H."/>
            <person name="Wu T."/>
            <person name="Yu G."/>
            <person name="Miranda M."/>
            <person name="Quach H.L."/>
            <person name="Tripp M."/>
            <person name="Chang C.H."/>
            <person name="Lee J.M."/>
            <person name="Toriumi M.J."/>
            <person name="Chan M.M."/>
            <person name="Tang C.C."/>
            <person name="Onodera C.S."/>
            <person name="Deng J.M."/>
            <person name="Akiyama K."/>
            <person name="Ansari Y."/>
            <person name="Arakawa T."/>
            <person name="Banh J."/>
            <person name="Banno F."/>
            <person name="Bowser L."/>
            <person name="Brooks S.Y."/>
            <person name="Carninci P."/>
            <person name="Chao Q."/>
            <person name="Choy N."/>
            <person name="Enju A."/>
            <person name="Goldsmith A.D."/>
            <person name="Gurjal M."/>
            <person name="Hansen N.F."/>
            <person name="Hayashizaki Y."/>
            <person name="Johnson-Hopson C."/>
            <person name="Hsuan V.W."/>
            <person name="Iida K."/>
            <person name="Karnes M."/>
            <person name="Khan S."/>
            <person name="Koesema E."/>
            <person name="Ishida J."/>
            <person name="Jiang P.X."/>
            <person name="Jones T."/>
            <person name="Kawai J."/>
            <person name="Kamiya A."/>
            <person name="Meyers C."/>
            <person name="Nakajima M."/>
            <person name="Narusaka M."/>
            <person name="Seki M."/>
            <person name="Sakurai T."/>
            <person name="Satou M."/>
            <person name="Tamse R."/>
            <person name="Vaysberg M."/>
            <person name="Wallender E.K."/>
            <person name="Wong C."/>
            <person name="Yamamura Y."/>
            <person name="Yuan S."/>
            <person name="Shinozaki K."/>
            <person name="Davis R.W."/>
            <person name="Theologis A."/>
            <person name="Ecker J.R."/>
        </authorList>
    </citation>
    <scope>NUCLEOTIDE SEQUENCE [LARGE SCALE MRNA] (ISOFORM 1)</scope>
    <source>
        <strain>cv. Columbia</strain>
    </source>
</reference>
<reference key="5">
    <citation type="submission" date="2001-10" db="EMBL/GenBank/DDBJ databases">
        <authorList>
            <person name="Ulker B."/>
            <person name="Kushnir S."/>
            <person name="Somssich I.E."/>
        </authorList>
    </citation>
    <scope>NUCLEOTIDE SEQUENCE [MRNA] OF 13-109 (ISOFORMS 1 AND 2)</scope>
    <source>
        <strain>cv. Columbia</strain>
        <tissue>Flower</tissue>
    </source>
</reference>
<evidence type="ECO:0000250" key="1"/>
<evidence type="ECO:0000255" key="2">
    <source>
        <dbReference type="PROSITE-ProRule" id="PRU00223"/>
    </source>
</evidence>
<evidence type="ECO:0000303" key="3">
    <source ref="5"/>
</evidence>
<evidence type="ECO:0000305" key="4"/>
<protein>
    <recommendedName>
        <fullName>Probable WRKY transcription factor 43</fullName>
    </recommendedName>
    <alternativeName>
        <fullName>WRKY DNA-binding protein 43</fullName>
    </alternativeName>
</protein>
<comment type="function">
    <text evidence="1">Transcription factor. Interacts specifically with the W box (5'-(T)TGAC[CT]-3'), a frequently occurring elicitor-responsive cis-acting element (By similarity).</text>
</comment>
<comment type="interaction">
    <interactant intactId="EBI-1235953">
        <id>Q8GY11</id>
    </interactant>
    <interactant intactId="EBI-1235664">
        <id>P25854</id>
        <label>CAM4</label>
    </interactant>
    <organismsDiffer>false</organismsDiffer>
    <experiments>2</experiments>
</comment>
<comment type="interaction">
    <interactant intactId="EBI-1235953">
        <id>Q8GY11</id>
    </interactant>
    <interactant intactId="EBI-15192297">
        <id>Q9LQF0</id>
        <label>TCP23</label>
    </interactant>
    <organismsDiffer>false</organismsDiffer>
    <experiments>3</experiments>
</comment>
<comment type="interaction">
    <interactant intactId="EBI-1235953">
        <id>Q8GY11</id>
    </interactant>
    <interactant intactId="EBI-25517843">
        <id>Q9SZG3</id>
        <label>VQ29</label>
    </interactant>
    <organismsDiffer>false</organismsDiffer>
    <experiments>3</experiments>
</comment>
<comment type="interaction">
    <interactant intactId="EBI-1235953">
        <id>Q8GY11</id>
    </interactant>
    <interactant intactId="EBI-25517821">
        <id>Q9FNP0</id>
        <label>VQ31</label>
    </interactant>
    <organismsDiffer>false</organismsDiffer>
    <experiments>3</experiments>
</comment>
<comment type="subcellular location">
    <subcellularLocation>
        <location evidence="4">Nucleus</location>
    </subcellularLocation>
</comment>
<comment type="alternative products">
    <event type="alternative splicing"/>
    <isoform>
        <id>Q8GY11-1</id>
        <name>1</name>
        <sequence type="displayed"/>
    </isoform>
    <isoform>
        <id>Q8GY11-2</id>
        <name>2</name>
        <sequence type="described" ref="VSP_007129"/>
    </isoform>
</comment>
<comment type="similarity">
    <text evidence="4">Belongs to the WRKY group II-c family.</text>
</comment>
<comment type="sequence caution" evidence="4">
    <conflict type="erroneous initiation">
        <sequence resource="EMBL-CDS" id="AAC62892"/>
    </conflict>
</comment>
<proteinExistence type="evidence at protein level"/>
<organism>
    <name type="scientific">Arabidopsis thaliana</name>
    <name type="common">Mouse-ear cress</name>
    <dbReference type="NCBI Taxonomy" id="3702"/>
    <lineage>
        <taxon>Eukaryota</taxon>
        <taxon>Viridiplantae</taxon>
        <taxon>Streptophyta</taxon>
        <taxon>Embryophyta</taxon>
        <taxon>Tracheophyta</taxon>
        <taxon>Spermatophyta</taxon>
        <taxon>Magnoliopsida</taxon>
        <taxon>eudicotyledons</taxon>
        <taxon>Gunneridae</taxon>
        <taxon>Pentapetalae</taxon>
        <taxon>rosids</taxon>
        <taxon>malvids</taxon>
        <taxon>Brassicales</taxon>
        <taxon>Brassicaceae</taxon>
        <taxon>Camelineae</taxon>
        <taxon>Arabidopsis</taxon>
    </lineage>
</organism>
<sequence>MNGLVDSSRDKKMKNPRFSFRTKSDADILDDGYRWRKYGQKSVKNSLYPRSYYRCTQHMCNVKKQVQRLSKETSIVETTYEGIHNHPCEELMQTLTPLLHQLQFLSKFT</sequence>
<name>WRK43_ARATH</name>
<keyword id="KW-0025">Alternative splicing</keyword>
<keyword id="KW-0238">DNA-binding</keyword>
<keyword id="KW-0539">Nucleus</keyword>
<keyword id="KW-1185">Reference proteome</keyword>
<keyword id="KW-0804">Transcription</keyword>
<keyword id="KW-0805">Transcription regulation</keyword>
<accession>Q8GY11</accession>
<accession>F4IH91</accession>
<accession>O82356</accession>
<accession>Q8VWZ0</accession>
<gene>
    <name type="primary">WRKY43</name>
    <name type="ordered locus">At2g46130</name>
    <name type="ORF">T3F17.22</name>
</gene>